<gene>
    <name evidence="1" type="primary">fis</name>
    <name type="ordered locus">UTI89_C3703</name>
</gene>
<name>FIS_ECOUT</name>
<sequence length="98" mass="11240">MFEQRVNSDVLTVSTVNSQDQVTQKPLRDSVKQALKNYFAQLNGQDVNDLYELVLAEVEQPLLDMVMQYTRGNQTRAALMMGINRGTLRKKLKKYGMN</sequence>
<accession>Q1R667</accession>
<feature type="chain" id="PRO_1000023325" description="DNA-binding protein Fis">
    <location>
        <begin position="1"/>
        <end position="98"/>
    </location>
</feature>
<feature type="DNA-binding region" description="H-T-H motif" evidence="1">
    <location>
        <begin position="74"/>
        <end position="93"/>
    </location>
</feature>
<reference key="1">
    <citation type="journal article" date="2006" name="Proc. Natl. Acad. Sci. U.S.A.">
        <title>Identification of genes subject to positive selection in uropathogenic strains of Escherichia coli: a comparative genomics approach.</title>
        <authorList>
            <person name="Chen S.L."/>
            <person name="Hung C.-S."/>
            <person name="Xu J."/>
            <person name="Reigstad C.S."/>
            <person name="Magrini V."/>
            <person name="Sabo A."/>
            <person name="Blasiar D."/>
            <person name="Bieri T."/>
            <person name="Meyer R.R."/>
            <person name="Ozersky P."/>
            <person name="Armstrong J.R."/>
            <person name="Fulton R.S."/>
            <person name="Latreille J.P."/>
            <person name="Spieth J."/>
            <person name="Hooton T.M."/>
            <person name="Mardis E.R."/>
            <person name="Hultgren S.J."/>
            <person name="Gordon J.I."/>
        </authorList>
    </citation>
    <scope>NUCLEOTIDE SEQUENCE [LARGE SCALE GENOMIC DNA]</scope>
    <source>
        <strain>UTI89 / UPEC</strain>
    </source>
</reference>
<comment type="function">
    <text evidence="1">Activates ribosomal RNA transcription. Plays a direct role in upstream activation of rRNA promoters.</text>
</comment>
<comment type="subunit">
    <text evidence="1">Homodimer.</text>
</comment>
<comment type="similarity">
    <text evidence="1">Belongs to the transcriptional regulatory Fis family.</text>
</comment>
<organism>
    <name type="scientific">Escherichia coli (strain UTI89 / UPEC)</name>
    <dbReference type="NCBI Taxonomy" id="364106"/>
    <lineage>
        <taxon>Bacteria</taxon>
        <taxon>Pseudomonadati</taxon>
        <taxon>Pseudomonadota</taxon>
        <taxon>Gammaproteobacteria</taxon>
        <taxon>Enterobacterales</taxon>
        <taxon>Enterobacteriaceae</taxon>
        <taxon>Escherichia</taxon>
    </lineage>
</organism>
<dbReference type="EMBL" id="CP000243">
    <property type="protein sequence ID" value="ABE09147.1"/>
    <property type="molecule type" value="Genomic_DNA"/>
</dbReference>
<dbReference type="RefSeq" id="WP_000462905.1">
    <property type="nucleotide sequence ID" value="NZ_CP064825.1"/>
</dbReference>
<dbReference type="SMR" id="Q1R667"/>
<dbReference type="GeneID" id="98390389"/>
<dbReference type="KEGG" id="eci:UTI89_C3703"/>
<dbReference type="HOGENOM" id="CLU_158040_3_0_6"/>
<dbReference type="Proteomes" id="UP000001952">
    <property type="component" value="Chromosome"/>
</dbReference>
<dbReference type="GO" id="GO:0003700">
    <property type="term" value="F:DNA-binding transcription factor activity"/>
    <property type="evidence" value="ECO:0007669"/>
    <property type="project" value="UniProtKB-UniRule"/>
</dbReference>
<dbReference type="GO" id="GO:0043565">
    <property type="term" value="F:sequence-specific DNA binding"/>
    <property type="evidence" value="ECO:0007669"/>
    <property type="project" value="InterPro"/>
</dbReference>
<dbReference type="FunFam" id="1.10.10.60:FF:000006">
    <property type="entry name" value="DNA-binding protein Fis"/>
    <property type="match status" value="1"/>
</dbReference>
<dbReference type="Gene3D" id="1.10.10.60">
    <property type="entry name" value="Homeodomain-like"/>
    <property type="match status" value="1"/>
</dbReference>
<dbReference type="HAMAP" id="MF_00166">
    <property type="entry name" value="DNA_binding_Fis"/>
    <property type="match status" value="1"/>
</dbReference>
<dbReference type="InterPro" id="IPR005412">
    <property type="entry name" value="Fis_DNA-bd"/>
</dbReference>
<dbReference type="InterPro" id="IPR009057">
    <property type="entry name" value="Homeodomain-like_sf"/>
</dbReference>
<dbReference type="InterPro" id="IPR002197">
    <property type="entry name" value="HTH_Fis"/>
</dbReference>
<dbReference type="InterPro" id="IPR050207">
    <property type="entry name" value="Trans_regulatory_Fis"/>
</dbReference>
<dbReference type="NCBIfam" id="NF001659">
    <property type="entry name" value="PRK00430.1"/>
    <property type="match status" value="1"/>
</dbReference>
<dbReference type="PANTHER" id="PTHR47918">
    <property type="entry name" value="DNA-BINDING PROTEIN FIS"/>
    <property type="match status" value="1"/>
</dbReference>
<dbReference type="PANTHER" id="PTHR47918:SF1">
    <property type="entry name" value="DNA-BINDING PROTEIN FIS"/>
    <property type="match status" value="1"/>
</dbReference>
<dbReference type="Pfam" id="PF02954">
    <property type="entry name" value="HTH_8"/>
    <property type="match status" value="1"/>
</dbReference>
<dbReference type="PIRSF" id="PIRSF002097">
    <property type="entry name" value="DNA-binding_Fis"/>
    <property type="match status" value="1"/>
</dbReference>
<dbReference type="PRINTS" id="PR01591">
    <property type="entry name" value="DNABINDNGFIS"/>
</dbReference>
<dbReference type="PRINTS" id="PR01590">
    <property type="entry name" value="HTHFIS"/>
</dbReference>
<dbReference type="SUPFAM" id="SSF46689">
    <property type="entry name" value="Homeodomain-like"/>
    <property type="match status" value="1"/>
</dbReference>
<proteinExistence type="inferred from homology"/>
<protein>
    <recommendedName>
        <fullName evidence="1">DNA-binding protein Fis</fullName>
    </recommendedName>
</protein>
<keyword id="KW-0010">Activator</keyword>
<keyword id="KW-0238">DNA-binding</keyword>
<keyword id="KW-0804">Transcription</keyword>
<keyword id="KW-0805">Transcription regulation</keyword>
<evidence type="ECO:0000255" key="1">
    <source>
        <dbReference type="HAMAP-Rule" id="MF_00166"/>
    </source>
</evidence>